<proteinExistence type="evidence at protein level"/>
<comment type="function">
    <text evidence="1 6">Ligand for members of the frizzled family of seven transmembrane receptors. Functions in the canonical Wnt signaling pathway that results in activation of transcription factors of the TCF/LEF family (PubMed:20018874). Functions as a upstream regulator of FGF10 expression. Plays an important role in embryonic lung development. May contribute to embryonic brain development by regulating the proliferation of dopaminergic precursors and neurons (By similarity).</text>
</comment>
<comment type="interaction">
    <interactant intactId="EBI-3905552">
        <id>P09544</id>
    </interactant>
    <interactant intactId="EBI-354921">
        <id>P11021</id>
        <label>HSPA5</label>
    </interactant>
    <organismsDiffer>false</organismsDiffer>
    <experiments>2</experiments>
</comment>
<comment type="subcellular location">
    <subcellularLocation>
        <location evidence="7">Secreted</location>
        <location evidence="7">Extracellular space</location>
        <location evidence="7">Extracellular matrix</location>
    </subcellularLocation>
    <subcellularLocation>
        <location evidence="6">Secreted</location>
    </subcellularLocation>
</comment>
<comment type="tissue specificity">
    <text evidence="5">Expressed in brain in the thalamus, in fetal and adult lung and in placenta.</text>
</comment>
<comment type="PTM">
    <text evidence="6">Palmitoleoylation is required for efficient binding to frizzled receptors. Depalmitoleoylation leads to Wnt signaling pathway inhibition.</text>
</comment>
<comment type="similarity">
    <text evidence="7">Belongs to the Wnt family.</text>
</comment>
<name>WNT2_HUMAN</name>
<keyword id="KW-0217">Developmental protein</keyword>
<keyword id="KW-1015">Disulfide bond</keyword>
<keyword id="KW-0272">Extracellular matrix</keyword>
<keyword id="KW-0325">Glycoprotein</keyword>
<keyword id="KW-0449">Lipoprotein</keyword>
<keyword id="KW-1267">Proteomics identification</keyword>
<keyword id="KW-1185">Reference proteome</keyword>
<keyword id="KW-0964">Secreted</keyword>
<keyword id="KW-0732">Signal</keyword>
<keyword id="KW-0879">Wnt signaling pathway</keyword>
<gene>
    <name type="primary">WNT2</name>
    <name type="synonym">INT1L1</name>
    <name type="synonym">IRP</name>
</gene>
<feature type="signal peptide" evidence="4">
    <location>
        <begin position="1"/>
        <end position="25"/>
    </location>
</feature>
<feature type="chain" id="PRO_0000041410" description="Protein Wnt-2">
    <location>
        <begin position="26"/>
        <end position="360"/>
    </location>
</feature>
<feature type="lipid moiety-binding region" description="O-palmitoleoyl serine; by PORCN" evidence="3">
    <location>
        <position position="212"/>
    </location>
</feature>
<feature type="glycosylation site" description="N-linked (GlcNAc...) asparagine" evidence="4">
    <location>
        <position position="295"/>
    </location>
</feature>
<feature type="disulfide bond" evidence="2">
    <location>
        <begin position="76"/>
        <end position="87"/>
    </location>
</feature>
<feature type="disulfide bond" evidence="2">
    <location>
        <begin position="127"/>
        <end position="135"/>
    </location>
</feature>
<feature type="disulfide bond" evidence="2">
    <location>
        <begin position="137"/>
        <end position="157"/>
    </location>
</feature>
<feature type="disulfide bond" evidence="2">
    <location>
        <begin position="206"/>
        <end position="220"/>
    </location>
</feature>
<feature type="disulfide bond" evidence="2">
    <location>
        <begin position="208"/>
        <end position="215"/>
    </location>
</feature>
<feature type="disulfide bond" evidence="2">
    <location>
        <begin position="278"/>
        <end position="309"/>
    </location>
</feature>
<feature type="disulfide bond" evidence="2">
    <location>
        <begin position="294"/>
        <end position="304"/>
    </location>
</feature>
<feature type="disulfide bond" evidence="2">
    <location>
        <begin position="308"/>
        <end position="348"/>
    </location>
</feature>
<feature type="disulfide bond" evidence="2">
    <location>
        <begin position="324"/>
        <end position="339"/>
    </location>
</feature>
<feature type="disulfide bond" evidence="2">
    <location>
        <begin position="326"/>
        <end position="336"/>
    </location>
</feature>
<feature type="disulfide bond" evidence="2">
    <location>
        <begin position="331"/>
        <end position="332"/>
    </location>
</feature>
<feature type="sequence variant" id="VAR_013865" description="In dbSNP:rs145839592." evidence="5">
    <original>L</original>
    <variation>R</variation>
    <location>
        <position position="5"/>
    </location>
</feature>
<feature type="sequence variant" id="VAR_052954" description="In dbSNP:rs1051751.">
    <original>C</original>
    <variation>F</variation>
    <location>
        <position position="294"/>
    </location>
</feature>
<feature type="sequence variant" id="VAR_013866" description="In dbSNP:rs148046128." evidence="5">
    <original>R</original>
    <variation>W</variation>
    <location>
        <position position="299"/>
    </location>
</feature>
<protein>
    <recommendedName>
        <fullName>Protein Wnt-2</fullName>
    </recommendedName>
    <alternativeName>
        <fullName>Int-1-like protein 1</fullName>
    </alternativeName>
    <alternativeName>
        <fullName>Int-1-related protein</fullName>
        <shortName>IRP</shortName>
    </alternativeName>
</protein>
<sequence length="360" mass="40418">MNAPLGGIWLWLPLLLTWLTPEVNSSWWYMRATGGSSRVMCDNVPGLVSSQRQLCHRHPDVMRAISQGVAEWTAECQHQFRQHRWNCNTLDRDHSLFGRVLLRSSRESAFVYAISSAGVVFAITRACSQGEVKSCSCDPKKMGSAKDSKGIFDWGGCSDNIDYGIKFARAFVDAKERKGKDARALMNLHNNRAGRKAVKRFLKQECKCHGVSGSCTLRTCWLAMADFRKTGDYLWRKYNGAIQVVMNQDGTGFTVANERFKKPTKNDLVYFENSPDYCIRDREAGSLGTAGRVCNLTSRGMDSCEVMCCGRGYDTSHVTRMTKCGCKFHWCCAVRCQDCLEALDVHTCKAPKNADWTTAT</sequence>
<organism>
    <name type="scientific">Homo sapiens</name>
    <name type="common">Human</name>
    <dbReference type="NCBI Taxonomy" id="9606"/>
    <lineage>
        <taxon>Eukaryota</taxon>
        <taxon>Metazoa</taxon>
        <taxon>Chordata</taxon>
        <taxon>Craniata</taxon>
        <taxon>Vertebrata</taxon>
        <taxon>Euteleostomi</taxon>
        <taxon>Mammalia</taxon>
        <taxon>Eutheria</taxon>
        <taxon>Euarchontoglires</taxon>
        <taxon>Primates</taxon>
        <taxon>Haplorrhini</taxon>
        <taxon>Catarrhini</taxon>
        <taxon>Hominidae</taxon>
        <taxon>Homo</taxon>
    </lineage>
</organism>
<dbReference type="EMBL" id="X07876">
    <property type="protein sequence ID" value="CAA30725.1"/>
    <property type="molecule type" value="mRNA"/>
</dbReference>
<dbReference type="EMBL" id="AK056742">
    <property type="protein sequence ID" value="BAG51800.1"/>
    <property type="molecule type" value="mRNA"/>
</dbReference>
<dbReference type="EMBL" id="BT019608">
    <property type="protein sequence ID" value="AAV38415.1"/>
    <property type="molecule type" value="mRNA"/>
</dbReference>
<dbReference type="EMBL" id="AC002465">
    <property type="protein sequence ID" value="AAB67043.1"/>
    <property type="molecule type" value="Genomic_DNA"/>
</dbReference>
<dbReference type="EMBL" id="AC006326">
    <property type="protein sequence ID" value="AAD28351.1"/>
    <property type="molecule type" value="Genomic_DNA"/>
</dbReference>
<dbReference type="EMBL" id="CH236947">
    <property type="protein sequence ID" value="EAL24355.1"/>
    <property type="molecule type" value="Genomic_DNA"/>
</dbReference>
<dbReference type="EMBL" id="CH471070">
    <property type="protein sequence ID" value="EAW83525.1"/>
    <property type="molecule type" value="Genomic_DNA"/>
</dbReference>
<dbReference type="EMBL" id="BC029854">
    <property type="protein sequence ID" value="AAH29854.1"/>
    <property type="molecule type" value="mRNA"/>
</dbReference>
<dbReference type="EMBL" id="BC078170">
    <property type="protein sequence ID" value="AAH78170.1"/>
    <property type="molecule type" value="mRNA"/>
</dbReference>
<dbReference type="CCDS" id="CCDS5771.1"/>
<dbReference type="PIR" id="S00834">
    <property type="entry name" value="S00834"/>
</dbReference>
<dbReference type="RefSeq" id="NP_003382.1">
    <property type="nucleotide sequence ID" value="NM_003391.3"/>
</dbReference>
<dbReference type="SMR" id="P09544"/>
<dbReference type="BioGRID" id="113309">
    <property type="interactions" value="26"/>
</dbReference>
<dbReference type="FunCoup" id="P09544">
    <property type="interactions" value="433"/>
</dbReference>
<dbReference type="IntAct" id="P09544">
    <property type="interactions" value="16"/>
</dbReference>
<dbReference type="STRING" id="9606.ENSP00000265441"/>
<dbReference type="ChEMBL" id="CHEMBL1255132"/>
<dbReference type="GlyCosmos" id="P09544">
    <property type="glycosylation" value="1 site, No reported glycans"/>
</dbReference>
<dbReference type="GlyGen" id="P09544">
    <property type="glycosylation" value="3 sites, 2 N-linked glycans (2 sites), 1 O-linked glycan (1 site)"/>
</dbReference>
<dbReference type="iPTMnet" id="P09544"/>
<dbReference type="PhosphoSitePlus" id="P09544"/>
<dbReference type="BioMuta" id="WNT2"/>
<dbReference type="DMDM" id="139750"/>
<dbReference type="MassIVE" id="P09544"/>
<dbReference type="PaxDb" id="9606-ENSP00000265441"/>
<dbReference type="PeptideAtlas" id="P09544"/>
<dbReference type="ProteomicsDB" id="52246"/>
<dbReference type="ABCD" id="P09544">
    <property type="antibodies" value="5 sequenced antibodies"/>
</dbReference>
<dbReference type="Antibodypedia" id="4474">
    <property type="antibodies" value="277 antibodies from 34 providers"/>
</dbReference>
<dbReference type="DNASU" id="7472"/>
<dbReference type="Ensembl" id="ENST00000265441.8">
    <property type="protein sequence ID" value="ENSP00000265441.3"/>
    <property type="gene ID" value="ENSG00000105989.10"/>
</dbReference>
<dbReference type="GeneID" id="7472"/>
<dbReference type="KEGG" id="hsa:7472"/>
<dbReference type="MANE-Select" id="ENST00000265441.8">
    <property type="protein sequence ID" value="ENSP00000265441.3"/>
    <property type="RefSeq nucleotide sequence ID" value="NM_003391.3"/>
    <property type="RefSeq protein sequence ID" value="NP_003382.1"/>
</dbReference>
<dbReference type="UCSC" id="uc003viz.4">
    <property type="organism name" value="human"/>
</dbReference>
<dbReference type="AGR" id="HGNC:12780"/>
<dbReference type="CTD" id="7472"/>
<dbReference type="DisGeNET" id="7472"/>
<dbReference type="GeneCards" id="WNT2"/>
<dbReference type="HGNC" id="HGNC:12780">
    <property type="gene designation" value="WNT2"/>
</dbReference>
<dbReference type="HPA" id="ENSG00000105989">
    <property type="expression patterns" value="Tissue enriched (placenta)"/>
</dbReference>
<dbReference type="MIM" id="147870">
    <property type="type" value="gene"/>
</dbReference>
<dbReference type="neXtProt" id="NX_P09544"/>
<dbReference type="OpenTargets" id="ENSG00000105989"/>
<dbReference type="PharmGKB" id="PA37381"/>
<dbReference type="VEuPathDB" id="HostDB:ENSG00000105989"/>
<dbReference type="eggNOG" id="KOG3913">
    <property type="taxonomic scope" value="Eukaryota"/>
</dbReference>
<dbReference type="GeneTree" id="ENSGT00940000159231"/>
<dbReference type="HOGENOM" id="CLU_033039_1_4_1"/>
<dbReference type="InParanoid" id="P09544"/>
<dbReference type="OMA" id="ITRMTKC"/>
<dbReference type="OrthoDB" id="5945655at2759"/>
<dbReference type="PAN-GO" id="P09544">
    <property type="GO annotations" value="6 GO annotations based on evolutionary models"/>
</dbReference>
<dbReference type="PhylomeDB" id="P09544"/>
<dbReference type="TreeFam" id="TF105310"/>
<dbReference type="PathwayCommons" id="P09544"/>
<dbReference type="Reactome" id="R-HSA-3238698">
    <property type="pathway name" value="WNT ligand biogenesis and trafficking"/>
</dbReference>
<dbReference type="Reactome" id="R-HSA-373080">
    <property type="pathway name" value="Class B/2 (Secretin family receptors)"/>
</dbReference>
<dbReference type="SignaLink" id="P09544"/>
<dbReference type="SIGNOR" id="P09544"/>
<dbReference type="BioGRID-ORCS" id="7472">
    <property type="hits" value="8 hits in 1146 CRISPR screens"/>
</dbReference>
<dbReference type="GeneWiki" id="WNT2"/>
<dbReference type="GenomeRNAi" id="7472"/>
<dbReference type="Pharos" id="P09544">
    <property type="development level" value="Tbio"/>
</dbReference>
<dbReference type="PRO" id="PR:P09544"/>
<dbReference type="Proteomes" id="UP000005640">
    <property type="component" value="Chromosome 7"/>
</dbReference>
<dbReference type="RNAct" id="P09544">
    <property type="molecule type" value="protein"/>
</dbReference>
<dbReference type="Bgee" id="ENSG00000105989">
    <property type="expression patterns" value="Expressed in stromal cell of endometrium and 111 other cell types or tissues"/>
</dbReference>
<dbReference type="ExpressionAtlas" id="P09544">
    <property type="expression patterns" value="baseline and differential"/>
</dbReference>
<dbReference type="GO" id="GO:0062023">
    <property type="term" value="C:collagen-containing extracellular matrix"/>
    <property type="evidence" value="ECO:0000314"/>
    <property type="project" value="UniProtKB"/>
</dbReference>
<dbReference type="GO" id="GO:0005737">
    <property type="term" value="C:cytoplasm"/>
    <property type="evidence" value="ECO:0000314"/>
    <property type="project" value="UniProtKB"/>
</dbReference>
<dbReference type="GO" id="GO:0005576">
    <property type="term" value="C:extracellular region"/>
    <property type="evidence" value="ECO:0000314"/>
    <property type="project" value="BHF-UCL"/>
</dbReference>
<dbReference type="GO" id="GO:0005615">
    <property type="term" value="C:extracellular space"/>
    <property type="evidence" value="ECO:0000318"/>
    <property type="project" value="GO_Central"/>
</dbReference>
<dbReference type="GO" id="GO:1990909">
    <property type="term" value="C:Wnt signalosome"/>
    <property type="evidence" value="ECO:0000305"/>
    <property type="project" value="ParkinsonsUK-UCL"/>
</dbReference>
<dbReference type="GO" id="GO:0005125">
    <property type="term" value="F:cytokine activity"/>
    <property type="evidence" value="ECO:0000314"/>
    <property type="project" value="BHF-UCL"/>
</dbReference>
<dbReference type="GO" id="GO:0005109">
    <property type="term" value="F:frizzled binding"/>
    <property type="evidence" value="ECO:0000353"/>
    <property type="project" value="UniProtKB"/>
</dbReference>
<dbReference type="GO" id="GO:0048018">
    <property type="term" value="F:receptor ligand activity"/>
    <property type="evidence" value="ECO:0000314"/>
    <property type="project" value="ParkinsonsUK-UCL"/>
</dbReference>
<dbReference type="GO" id="GO:0055009">
    <property type="term" value="P:atrial cardiac muscle tissue morphogenesis"/>
    <property type="evidence" value="ECO:0007669"/>
    <property type="project" value="Ensembl"/>
</dbReference>
<dbReference type="GO" id="GO:0060070">
    <property type="term" value="P:canonical Wnt signaling pathway"/>
    <property type="evidence" value="ECO:0000314"/>
    <property type="project" value="UniProtKB"/>
</dbReference>
<dbReference type="GO" id="GO:0060317">
    <property type="term" value="P:cardiac epithelial to mesenchymal transition"/>
    <property type="evidence" value="ECO:0007669"/>
    <property type="project" value="Ensembl"/>
</dbReference>
<dbReference type="GO" id="GO:0060038">
    <property type="term" value="P:cardiac muscle cell proliferation"/>
    <property type="evidence" value="ECO:0007669"/>
    <property type="project" value="Ensembl"/>
</dbReference>
<dbReference type="GO" id="GO:0045165">
    <property type="term" value="P:cell fate commitment"/>
    <property type="evidence" value="ECO:0000318"/>
    <property type="project" value="GO_Central"/>
</dbReference>
<dbReference type="GO" id="GO:0033278">
    <property type="term" value="P:cell proliferation in midbrain"/>
    <property type="evidence" value="ECO:0000314"/>
    <property type="project" value="ParkinsonsUK-UCL"/>
</dbReference>
<dbReference type="GO" id="GO:0007267">
    <property type="term" value="P:cell-cell signaling"/>
    <property type="evidence" value="ECO:0000314"/>
    <property type="project" value="BHF-UCL"/>
</dbReference>
<dbReference type="GO" id="GO:0071300">
    <property type="term" value="P:cellular response to retinoic acid"/>
    <property type="evidence" value="ECO:0000250"/>
    <property type="project" value="UniProtKB"/>
</dbReference>
<dbReference type="GO" id="GO:0071560">
    <property type="term" value="P:cellular response to transforming growth factor beta stimulus"/>
    <property type="evidence" value="ECO:0000270"/>
    <property type="project" value="UniProtKB"/>
</dbReference>
<dbReference type="GO" id="GO:0060502">
    <property type="term" value="P:epithelial cell proliferation involved in lung morphogenesis"/>
    <property type="evidence" value="ECO:0007669"/>
    <property type="project" value="Ensembl"/>
</dbReference>
<dbReference type="GO" id="GO:0061072">
    <property type="term" value="P:iris morphogenesis"/>
    <property type="evidence" value="ECO:0000250"/>
    <property type="project" value="BHF-UCL"/>
</dbReference>
<dbReference type="GO" id="GO:0060716">
    <property type="term" value="P:labyrinthine layer blood vessel development"/>
    <property type="evidence" value="ECO:0007669"/>
    <property type="project" value="Ensembl"/>
</dbReference>
<dbReference type="GO" id="GO:0002088">
    <property type="term" value="P:lens development in camera-type eye"/>
    <property type="evidence" value="ECO:0000250"/>
    <property type="project" value="BHF-UCL"/>
</dbReference>
<dbReference type="GO" id="GO:0060492">
    <property type="term" value="P:lung induction"/>
    <property type="evidence" value="ECO:0007669"/>
    <property type="project" value="Ensembl"/>
</dbReference>
<dbReference type="GO" id="GO:0061180">
    <property type="term" value="P:mammary gland epithelium development"/>
    <property type="evidence" value="ECO:0000270"/>
    <property type="project" value="UniProtKB"/>
</dbReference>
<dbReference type="GO" id="GO:0010463">
    <property type="term" value="P:mesenchymal cell proliferation"/>
    <property type="evidence" value="ECO:0007669"/>
    <property type="project" value="Ensembl"/>
</dbReference>
<dbReference type="GO" id="GO:1904948">
    <property type="term" value="P:midbrain dopaminergic neuron differentiation"/>
    <property type="evidence" value="ECO:0000314"/>
    <property type="project" value="ParkinsonsUK-UCL"/>
</dbReference>
<dbReference type="GO" id="GO:0022008">
    <property type="term" value="P:neurogenesis"/>
    <property type="evidence" value="ECO:0000304"/>
    <property type="project" value="ParkinsonsUK-UCL"/>
</dbReference>
<dbReference type="GO" id="GO:0030182">
    <property type="term" value="P:neuron differentiation"/>
    <property type="evidence" value="ECO:0000250"/>
    <property type="project" value="UniProtKB"/>
</dbReference>
<dbReference type="GO" id="GO:0060045">
    <property type="term" value="P:positive regulation of cardiac muscle cell proliferation"/>
    <property type="evidence" value="ECO:0007669"/>
    <property type="project" value="Ensembl"/>
</dbReference>
<dbReference type="GO" id="GO:0008284">
    <property type="term" value="P:positive regulation of cell population proliferation"/>
    <property type="evidence" value="ECO:0000314"/>
    <property type="project" value="BHF-UCL"/>
</dbReference>
<dbReference type="GO" id="GO:0060501">
    <property type="term" value="P:positive regulation of epithelial cell proliferation involved in lung morphogenesis"/>
    <property type="evidence" value="ECO:0007669"/>
    <property type="project" value="Ensembl"/>
</dbReference>
<dbReference type="GO" id="GO:0048146">
    <property type="term" value="P:positive regulation of fibroblast proliferation"/>
    <property type="evidence" value="ECO:0000315"/>
    <property type="project" value="BHF-UCL"/>
</dbReference>
<dbReference type="GO" id="GO:0002053">
    <property type="term" value="P:positive regulation of mesenchymal cell proliferation"/>
    <property type="evidence" value="ECO:0007669"/>
    <property type="project" value="Ensembl"/>
</dbReference>
<dbReference type="GO" id="GO:0050769">
    <property type="term" value="P:positive regulation of neurogenesis"/>
    <property type="evidence" value="ECO:0007669"/>
    <property type="project" value="Ensembl"/>
</dbReference>
<dbReference type="GO" id="GO:0045944">
    <property type="term" value="P:positive regulation of transcription by RNA polymerase II"/>
    <property type="evidence" value="ECO:0000314"/>
    <property type="project" value="BHF-UCL"/>
</dbReference>
<dbReference type="CDD" id="cd19345">
    <property type="entry name" value="Wnt_Wnt2"/>
    <property type="match status" value="1"/>
</dbReference>
<dbReference type="FunFam" id="3.30.2460.20:FF:000001">
    <property type="entry name" value="Wnt homolog"/>
    <property type="match status" value="1"/>
</dbReference>
<dbReference type="Gene3D" id="3.30.2460.20">
    <property type="match status" value="1"/>
</dbReference>
<dbReference type="InterPro" id="IPR005817">
    <property type="entry name" value="Wnt"/>
</dbReference>
<dbReference type="InterPro" id="IPR009140">
    <property type="entry name" value="Wnt2"/>
</dbReference>
<dbReference type="InterPro" id="IPR043158">
    <property type="entry name" value="Wnt_C"/>
</dbReference>
<dbReference type="InterPro" id="IPR018161">
    <property type="entry name" value="Wnt_CS"/>
</dbReference>
<dbReference type="PANTHER" id="PTHR12027:SF86">
    <property type="entry name" value="PROTEIN WNT-2"/>
    <property type="match status" value="1"/>
</dbReference>
<dbReference type="PANTHER" id="PTHR12027">
    <property type="entry name" value="WNT RELATED"/>
    <property type="match status" value="1"/>
</dbReference>
<dbReference type="Pfam" id="PF00110">
    <property type="entry name" value="wnt"/>
    <property type="match status" value="1"/>
</dbReference>
<dbReference type="PRINTS" id="PR01842">
    <property type="entry name" value="WNT2PROTEIN"/>
</dbReference>
<dbReference type="PRINTS" id="PR01349">
    <property type="entry name" value="WNTPROTEIN"/>
</dbReference>
<dbReference type="SMART" id="SM00097">
    <property type="entry name" value="WNT1"/>
    <property type="match status" value="1"/>
</dbReference>
<dbReference type="PROSITE" id="PS00246">
    <property type="entry name" value="WNT1"/>
    <property type="match status" value="1"/>
</dbReference>
<evidence type="ECO:0000250" key="1">
    <source>
        <dbReference type="UniProtKB" id="P21552"/>
    </source>
</evidence>
<evidence type="ECO:0000250" key="2">
    <source>
        <dbReference type="UniProtKB" id="P28026"/>
    </source>
</evidence>
<evidence type="ECO:0000250" key="3">
    <source>
        <dbReference type="UniProtKB" id="P56704"/>
    </source>
</evidence>
<evidence type="ECO:0000255" key="4"/>
<evidence type="ECO:0000269" key="5">
    <source>
    </source>
</evidence>
<evidence type="ECO:0000269" key="6">
    <source>
    </source>
</evidence>
<evidence type="ECO:0000305" key="7"/>
<accession>P09544</accession>
<accession>A4D0V1</accession>
<accession>Q75N05</accession>
<accession>Q9UDP9</accession>
<reference key="1">
    <citation type="journal article" date="1988" name="EMBO J.">
        <title>Isolation of a human gene with protein sequence similarity to human and murine int-1 and the Drosophila segment polarity mutant wingless.</title>
        <authorList>
            <person name="Wainwright B.J."/>
            <person name="Scambler P.J."/>
            <person name="Stanier P."/>
            <person name="Watson E.K."/>
            <person name="Bell G."/>
            <person name="Wicking C."/>
            <person name="Estivill X."/>
            <person name="Courtney M."/>
            <person name="Boue A."/>
            <person name="Pedersen P.S."/>
            <person name="Williamson R."/>
            <person name="Farrall M."/>
        </authorList>
    </citation>
    <scope>NUCLEOTIDE SEQUENCE [MRNA]</scope>
    <source>
        <tissue>Lung</tissue>
    </source>
</reference>
<reference key="2">
    <citation type="submission" date="1988-04" db="EMBL/GenBank/DDBJ databases">
        <authorList>
            <person name="Farrall M."/>
        </authorList>
    </citation>
    <scope>SEQUENCE REVISION</scope>
</reference>
<reference key="3">
    <citation type="journal article" date="2004" name="Nat. Genet.">
        <title>Complete sequencing and characterization of 21,243 full-length human cDNAs.</title>
        <authorList>
            <person name="Ota T."/>
            <person name="Suzuki Y."/>
            <person name="Nishikawa T."/>
            <person name="Otsuki T."/>
            <person name="Sugiyama T."/>
            <person name="Irie R."/>
            <person name="Wakamatsu A."/>
            <person name="Hayashi K."/>
            <person name="Sato H."/>
            <person name="Nagai K."/>
            <person name="Kimura K."/>
            <person name="Makita H."/>
            <person name="Sekine M."/>
            <person name="Obayashi M."/>
            <person name="Nishi T."/>
            <person name="Shibahara T."/>
            <person name="Tanaka T."/>
            <person name="Ishii S."/>
            <person name="Yamamoto J."/>
            <person name="Saito K."/>
            <person name="Kawai Y."/>
            <person name="Isono Y."/>
            <person name="Nakamura Y."/>
            <person name="Nagahari K."/>
            <person name="Murakami K."/>
            <person name="Yasuda T."/>
            <person name="Iwayanagi T."/>
            <person name="Wagatsuma M."/>
            <person name="Shiratori A."/>
            <person name="Sudo H."/>
            <person name="Hosoiri T."/>
            <person name="Kaku Y."/>
            <person name="Kodaira H."/>
            <person name="Kondo H."/>
            <person name="Sugawara M."/>
            <person name="Takahashi M."/>
            <person name="Kanda K."/>
            <person name="Yokoi T."/>
            <person name="Furuya T."/>
            <person name="Kikkawa E."/>
            <person name="Omura Y."/>
            <person name="Abe K."/>
            <person name="Kamihara K."/>
            <person name="Katsuta N."/>
            <person name="Sato K."/>
            <person name="Tanikawa M."/>
            <person name="Yamazaki M."/>
            <person name="Ninomiya K."/>
            <person name="Ishibashi T."/>
            <person name="Yamashita H."/>
            <person name="Murakawa K."/>
            <person name="Fujimori K."/>
            <person name="Tanai H."/>
            <person name="Kimata M."/>
            <person name="Watanabe M."/>
            <person name="Hiraoka S."/>
            <person name="Chiba Y."/>
            <person name="Ishida S."/>
            <person name="Ono Y."/>
            <person name="Takiguchi S."/>
            <person name="Watanabe S."/>
            <person name="Yosida M."/>
            <person name="Hotuta T."/>
            <person name="Kusano J."/>
            <person name="Kanehori K."/>
            <person name="Takahashi-Fujii A."/>
            <person name="Hara H."/>
            <person name="Tanase T.-O."/>
            <person name="Nomura Y."/>
            <person name="Togiya S."/>
            <person name="Komai F."/>
            <person name="Hara R."/>
            <person name="Takeuchi K."/>
            <person name="Arita M."/>
            <person name="Imose N."/>
            <person name="Musashino K."/>
            <person name="Yuuki H."/>
            <person name="Oshima A."/>
            <person name="Sasaki N."/>
            <person name="Aotsuka S."/>
            <person name="Yoshikawa Y."/>
            <person name="Matsunawa H."/>
            <person name="Ichihara T."/>
            <person name="Shiohata N."/>
            <person name="Sano S."/>
            <person name="Moriya S."/>
            <person name="Momiyama H."/>
            <person name="Satoh N."/>
            <person name="Takami S."/>
            <person name="Terashima Y."/>
            <person name="Suzuki O."/>
            <person name="Nakagawa S."/>
            <person name="Senoh A."/>
            <person name="Mizoguchi H."/>
            <person name="Goto Y."/>
            <person name="Shimizu F."/>
            <person name="Wakebe H."/>
            <person name="Hishigaki H."/>
            <person name="Watanabe T."/>
            <person name="Sugiyama A."/>
            <person name="Takemoto M."/>
            <person name="Kawakami B."/>
            <person name="Yamazaki M."/>
            <person name="Watanabe K."/>
            <person name="Kumagai A."/>
            <person name="Itakura S."/>
            <person name="Fukuzumi Y."/>
            <person name="Fujimori Y."/>
            <person name="Komiyama M."/>
            <person name="Tashiro H."/>
            <person name="Tanigami A."/>
            <person name="Fujiwara T."/>
            <person name="Ono T."/>
            <person name="Yamada K."/>
            <person name="Fujii Y."/>
            <person name="Ozaki K."/>
            <person name="Hirao M."/>
            <person name="Ohmori Y."/>
            <person name="Kawabata A."/>
            <person name="Hikiji T."/>
            <person name="Kobatake N."/>
            <person name="Inagaki H."/>
            <person name="Ikema Y."/>
            <person name="Okamoto S."/>
            <person name="Okitani R."/>
            <person name="Kawakami T."/>
            <person name="Noguchi S."/>
            <person name="Itoh T."/>
            <person name="Shigeta K."/>
            <person name="Senba T."/>
            <person name="Matsumura K."/>
            <person name="Nakajima Y."/>
            <person name="Mizuno T."/>
            <person name="Morinaga M."/>
            <person name="Sasaki M."/>
            <person name="Togashi T."/>
            <person name="Oyama M."/>
            <person name="Hata H."/>
            <person name="Watanabe M."/>
            <person name="Komatsu T."/>
            <person name="Mizushima-Sugano J."/>
            <person name="Satoh T."/>
            <person name="Shirai Y."/>
            <person name="Takahashi Y."/>
            <person name="Nakagawa K."/>
            <person name="Okumura K."/>
            <person name="Nagase T."/>
            <person name="Nomura N."/>
            <person name="Kikuchi H."/>
            <person name="Masuho Y."/>
            <person name="Yamashita R."/>
            <person name="Nakai K."/>
            <person name="Yada T."/>
            <person name="Nakamura Y."/>
            <person name="Ohara O."/>
            <person name="Isogai T."/>
            <person name="Sugano S."/>
        </authorList>
    </citation>
    <scope>NUCLEOTIDE SEQUENCE [LARGE SCALE MRNA]</scope>
    <source>
        <tissue>Placenta</tissue>
    </source>
</reference>
<reference key="4">
    <citation type="submission" date="2004-10" db="EMBL/GenBank/DDBJ databases">
        <title>Cloning of human full-length CDSs in BD Creator(TM) system donor vector.</title>
        <authorList>
            <person name="Kalnine N."/>
            <person name="Chen X."/>
            <person name="Rolfs A."/>
            <person name="Halleck A."/>
            <person name="Hines L."/>
            <person name="Eisenstein S."/>
            <person name="Koundinya M."/>
            <person name="Raphael J."/>
            <person name="Moreira D."/>
            <person name="Kelley T."/>
            <person name="LaBaer J."/>
            <person name="Lin Y."/>
            <person name="Phelan M."/>
            <person name="Farmer A."/>
        </authorList>
    </citation>
    <scope>NUCLEOTIDE SEQUENCE [LARGE SCALE MRNA]</scope>
</reference>
<reference key="5">
    <citation type="journal article" date="2003" name="Nature">
        <title>The DNA sequence of human chromosome 7.</title>
        <authorList>
            <person name="Hillier L.W."/>
            <person name="Fulton R.S."/>
            <person name="Fulton L.A."/>
            <person name="Graves T.A."/>
            <person name="Pepin K.H."/>
            <person name="Wagner-McPherson C."/>
            <person name="Layman D."/>
            <person name="Maas J."/>
            <person name="Jaeger S."/>
            <person name="Walker R."/>
            <person name="Wylie K."/>
            <person name="Sekhon M."/>
            <person name="Becker M.C."/>
            <person name="O'Laughlin M.D."/>
            <person name="Schaller M.E."/>
            <person name="Fewell G.A."/>
            <person name="Delehaunty K.D."/>
            <person name="Miner T.L."/>
            <person name="Nash W.E."/>
            <person name="Cordes M."/>
            <person name="Du H."/>
            <person name="Sun H."/>
            <person name="Edwards J."/>
            <person name="Bradshaw-Cordum H."/>
            <person name="Ali J."/>
            <person name="Andrews S."/>
            <person name="Isak A."/>
            <person name="Vanbrunt A."/>
            <person name="Nguyen C."/>
            <person name="Du F."/>
            <person name="Lamar B."/>
            <person name="Courtney L."/>
            <person name="Kalicki J."/>
            <person name="Ozersky P."/>
            <person name="Bielicki L."/>
            <person name="Scott K."/>
            <person name="Holmes A."/>
            <person name="Harkins R."/>
            <person name="Harris A."/>
            <person name="Strong C.M."/>
            <person name="Hou S."/>
            <person name="Tomlinson C."/>
            <person name="Dauphin-Kohlberg S."/>
            <person name="Kozlowicz-Reilly A."/>
            <person name="Leonard S."/>
            <person name="Rohlfing T."/>
            <person name="Rock S.M."/>
            <person name="Tin-Wollam A.-M."/>
            <person name="Abbott A."/>
            <person name="Minx P."/>
            <person name="Maupin R."/>
            <person name="Strowmatt C."/>
            <person name="Latreille P."/>
            <person name="Miller N."/>
            <person name="Johnson D."/>
            <person name="Murray J."/>
            <person name="Woessner J.P."/>
            <person name="Wendl M.C."/>
            <person name="Yang S.-P."/>
            <person name="Schultz B.R."/>
            <person name="Wallis J.W."/>
            <person name="Spieth J."/>
            <person name="Bieri T.A."/>
            <person name="Nelson J.O."/>
            <person name="Berkowicz N."/>
            <person name="Wohldmann P.E."/>
            <person name="Cook L.L."/>
            <person name="Hickenbotham M.T."/>
            <person name="Eldred J."/>
            <person name="Williams D."/>
            <person name="Bedell J.A."/>
            <person name="Mardis E.R."/>
            <person name="Clifton S.W."/>
            <person name="Chissoe S.L."/>
            <person name="Marra M.A."/>
            <person name="Raymond C."/>
            <person name="Haugen E."/>
            <person name="Gillett W."/>
            <person name="Zhou Y."/>
            <person name="James R."/>
            <person name="Phelps K."/>
            <person name="Iadanoto S."/>
            <person name="Bubb K."/>
            <person name="Simms E."/>
            <person name="Levy R."/>
            <person name="Clendenning J."/>
            <person name="Kaul R."/>
            <person name="Kent W.J."/>
            <person name="Furey T.S."/>
            <person name="Baertsch R.A."/>
            <person name="Brent M.R."/>
            <person name="Keibler E."/>
            <person name="Flicek P."/>
            <person name="Bork P."/>
            <person name="Suyama M."/>
            <person name="Bailey J.A."/>
            <person name="Portnoy M.E."/>
            <person name="Torrents D."/>
            <person name="Chinwalla A.T."/>
            <person name="Gish W.R."/>
            <person name="Eddy S.R."/>
            <person name="McPherson J.D."/>
            <person name="Olson M.V."/>
            <person name="Eichler E.E."/>
            <person name="Green E.D."/>
            <person name="Waterston R.H."/>
            <person name="Wilson R.K."/>
        </authorList>
    </citation>
    <scope>NUCLEOTIDE SEQUENCE [LARGE SCALE GENOMIC DNA]</scope>
</reference>
<reference key="6">
    <citation type="journal article" date="2003" name="Science">
        <title>Human chromosome 7: DNA sequence and biology.</title>
        <authorList>
            <person name="Scherer S.W."/>
            <person name="Cheung J."/>
            <person name="MacDonald J.R."/>
            <person name="Osborne L.R."/>
            <person name="Nakabayashi K."/>
            <person name="Herbrick J.-A."/>
            <person name="Carson A.R."/>
            <person name="Parker-Katiraee L."/>
            <person name="Skaug J."/>
            <person name="Khaja R."/>
            <person name="Zhang J."/>
            <person name="Hudek A.K."/>
            <person name="Li M."/>
            <person name="Haddad M."/>
            <person name="Duggan G.E."/>
            <person name="Fernandez B.A."/>
            <person name="Kanematsu E."/>
            <person name="Gentles S."/>
            <person name="Christopoulos C.C."/>
            <person name="Choufani S."/>
            <person name="Kwasnicka D."/>
            <person name="Zheng X.H."/>
            <person name="Lai Z."/>
            <person name="Nusskern D.R."/>
            <person name="Zhang Q."/>
            <person name="Gu Z."/>
            <person name="Lu F."/>
            <person name="Zeesman S."/>
            <person name="Nowaczyk M.J."/>
            <person name="Teshima I."/>
            <person name="Chitayat D."/>
            <person name="Shuman C."/>
            <person name="Weksberg R."/>
            <person name="Zackai E.H."/>
            <person name="Grebe T.A."/>
            <person name="Cox S.R."/>
            <person name="Kirkpatrick S.J."/>
            <person name="Rahman N."/>
            <person name="Friedman J.M."/>
            <person name="Heng H.H.Q."/>
            <person name="Pelicci P.G."/>
            <person name="Lo-Coco F."/>
            <person name="Belloni E."/>
            <person name="Shaffer L.G."/>
            <person name="Pober B."/>
            <person name="Morton C.C."/>
            <person name="Gusella J.F."/>
            <person name="Bruns G.A.P."/>
            <person name="Korf B.R."/>
            <person name="Quade B.J."/>
            <person name="Ligon A.H."/>
            <person name="Ferguson H."/>
            <person name="Higgins A.W."/>
            <person name="Leach N.T."/>
            <person name="Herrick S.R."/>
            <person name="Lemyre E."/>
            <person name="Farra C.G."/>
            <person name="Kim H.-G."/>
            <person name="Summers A.M."/>
            <person name="Gripp K.W."/>
            <person name="Roberts W."/>
            <person name="Szatmari P."/>
            <person name="Winsor E.J.T."/>
            <person name="Grzeschik K.-H."/>
            <person name="Teebi A."/>
            <person name="Minassian B.A."/>
            <person name="Kere J."/>
            <person name="Armengol L."/>
            <person name="Pujana M.A."/>
            <person name="Estivill X."/>
            <person name="Wilson M.D."/>
            <person name="Koop B.F."/>
            <person name="Tosi S."/>
            <person name="Moore G.E."/>
            <person name="Boright A.P."/>
            <person name="Zlotorynski E."/>
            <person name="Kerem B."/>
            <person name="Kroisel P.M."/>
            <person name="Petek E."/>
            <person name="Oscier D.G."/>
            <person name="Mould S.J."/>
            <person name="Doehner H."/>
            <person name="Doehner K."/>
            <person name="Rommens J.M."/>
            <person name="Vincent J.B."/>
            <person name="Venter J.C."/>
            <person name="Li P.W."/>
            <person name="Mural R.J."/>
            <person name="Adams M.D."/>
            <person name="Tsui L.-C."/>
        </authorList>
    </citation>
    <scope>NUCLEOTIDE SEQUENCE [LARGE SCALE GENOMIC DNA]</scope>
</reference>
<reference key="7">
    <citation type="submission" date="2005-07" db="EMBL/GenBank/DDBJ databases">
        <authorList>
            <person name="Mural R.J."/>
            <person name="Istrail S."/>
            <person name="Sutton G."/>
            <person name="Florea L."/>
            <person name="Halpern A.L."/>
            <person name="Mobarry C.M."/>
            <person name="Lippert R."/>
            <person name="Walenz B."/>
            <person name="Shatkay H."/>
            <person name="Dew I."/>
            <person name="Miller J.R."/>
            <person name="Flanigan M.J."/>
            <person name="Edwards N.J."/>
            <person name="Bolanos R."/>
            <person name="Fasulo D."/>
            <person name="Halldorsson B.V."/>
            <person name="Hannenhalli S."/>
            <person name="Turner R."/>
            <person name="Yooseph S."/>
            <person name="Lu F."/>
            <person name="Nusskern D.R."/>
            <person name="Shue B.C."/>
            <person name="Zheng X.H."/>
            <person name="Zhong F."/>
            <person name="Delcher A.L."/>
            <person name="Huson D.H."/>
            <person name="Kravitz S.A."/>
            <person name="Mouchard L."/>
            <person name="Reinert K."/>
            <person name="Remington K.A."/>
            <person name="Clark A.G."/>
            <person name="Waterman M.S."/>
            <person name="Eichler E.E."/>
            <person name="Adams M.D."/>
            <person name="Hunkapiller M.W."/>
            <person name="Myers E.W."/>
            <person name="Venter J.C."/>
        </authorList>
    </citation>
    <scope>NUCLEOTIDE SEQUENCE [LARGE SCALE GENOMIC DNA]</scope>
</reference>
<reference key="8">
    <citation type="journal article" date="2004" name="Genome Res.">
        <title>The status, quality, and expansion of the NIH full-length cDNA project: the Mammalian Gene Collection (MGC).</title>
        <authorList>
            <consortium name="The MGC Project Team"/>
        </authorList>
    </citation>
    <scope>NUCLEOTIDE SEQUENCE [LARGE SCALE MRNA]</scope>
    <source>
        <tissue>Brain</tissue>
        <tissue>Lung</tissue>
        <tissue>Testis</tissue>
    </source>
</reference>
<reference key="9">
    <citation type="journal article" date="2010" name="J. Biol. Chem.">
        <title>Wnt2 regulates progenitor proliferation in the developing ventral midbrain.</title>
        <authorList>
            <person name="Sousa K.M."/>
            <person name="Villaescusa J.C."/>
            <person name="Cajanek L."/>
            <person name="Ondr J.K."/>
            <person name="Castelo-Branco G."/>
            <person name="Hofstra W."/>
            <person name="Bryja V."/>
            <person name="Palmberg C."/>
            <person name="Bergman T."/>
            <person name="Wainwright B."/>
            <person name="Lang R.A."/>
            <person name="Arenas E."/>
        </authorList>
    </citation>
    <scope>FUNCTION</scope>
    <scope>SUBCELLULAR LOCATION</scope>
    <scope>PALMITOLEOYLATION</scope>
</reference>
<reference key="10">
    <citation type="journal article" date="2001" name="Am. J. Med. Genet.">
        <title>Evidence supporting WNT2 as an autism susceptibility gene.</title>
        <authorList>
            <person name="Wassink T.H."/>
            <person name="Piven J."/>
            <person name="Vieland V.J."/>
            <person name="Huang J."/>
            <person name="Swiderski R.E."/>
            <person name="Pietila J."/>
            <person name="Braun T."/>
            <person name="Beck G."/>
            <person name="Folstein S.E."/>
            <person name="Haines J.L."/>
            <person name="Sheffield V.C."/>
        </authorList>
    </citation>
    <scope>VARIANTS ARG-5 AND TRP-299</scope>
    <scope>TISSUE SPECIFICITY</scope>
</reference>
<reference key="11">
    <citation type="journal article" date="2002" name="Am. J. Med. Genet.">
        <title>No association between the WNT2 gene and autistic disorder.</title>
        <authorList>
            <person name="McCoy P.A."/>
            <person name="Shao Y."/>
            <person name="Wolpert C.M."/>
            <person name="Donnelly S.L."/>
            <person name="Ashley-Koch A."/>
            <person name="Abel H.L."/>
            <person name="Ravan S.A."/>
            <person name="Abramson R.K."/>
            <person name="Wright H.H."/>
            <person name="DeLong G.R."/>
            <person name="Cuccaro M.L."/>
            <person name="Gilbert J.R."/>
            <person name="Pericak-Vance M.A."/>
        </authorList>
    </citation>
    <scope>SHOWS THAT WNT2 IS NOT LINKED TO AUTISM SUSCEPTIBILITY</scope>
</reference>